<comment type="subcellular location">
    <subcellularLocation>
        <location>Plastid</location>
        <location>Chloroplast</location>
    </subcellularLocation>
</comment>
<comment type="similarity">
    <text evidence="1">Belongs to the bacterial ribosomal protein bL32 family.</text>
</comment>
<sequence>MAVPKKRTSTSKKRIRKNIWKRKGYWVALKAFSLAKSLSTGNSKSFFVRQTKINK</sequence>
<evidence type="ECO:0000255" key="1">
    <source>
        <dbReference type="HAMAP-Rule" id="MF_00340"/>
    </source>
</evidence>
<evidence type="ECO:0000305" key="2"/>
<accession>Q2VED2</accession>
<organism>
    <name type="scientific">Solanum tuberosum</name>
    <name type="common">Potato</name>
    <dbReference type="NCBI Taxonomy" id="4113"/>
    <lineage>
        <taxon>Eukaryota</taxon>
        <taxon>Viridiplantae</taxon>
        <taxon>Streptophyta</taxon>
        <taxon>Embryophyta</taxon>
        <taxon>Tracheophyta</taxon>
        <taxon>Spermatophyta</taxon>
        <taxon>Magnoliopsida</taxon>
        <taxon>eudicotyledons</taxon>
        <taxon>Gunneridae</taxon>
        <taxon>Pentapetalae</taxon>
        <taxon>asterids</taxon>
        <taxon>lamiids</taxon>
        <taxon>Solanales</taxon>
        <taxon>Solanaceae</taxon>
        <taxon>Solanoideae</taxon>
        <taxon>Solaneae</taxon>
        <taxon>Solanum</taxon>
    </lineage>
</organism>
<reference key="1">
    <citation type="journal article" date="2006" name="Plant Cell Rep.">
        <title>The complete chloroplast genome sequences of Solanum tuberosum and comparative analysis with Solanaceae species identified the presence of a 241-bp deletion in cultivated potato chloroplast DNA sequence.</title>
        <authorList>
            <person name="Chung H.-J."/>
            <person name="Jung J.D."/>
            <person name="Park H.-W."/>
            <person name="Kim J.-H."/>
            <person name="Cha H.W."/>
            <person name="Min S.R."/>
            <person name="Jeong W.-J."/>
            <person name="Liu J.R."/>
        </authorList>
    </citation>
    <scope>NUCLEOTIDE SEQUENCE [LARGE SCALE GENOMIC DNA]</scope>
    <source>
        <strain>cv. Desiree</strain>
    </source>
</reference>
<reference key="2">
    <citation type="submission" date="2006-02" db="EMBL/GenBank/DDBJ databases">
        <title>Complete chloroplast genome sequences of Solanum tuberosum cultivar Desiree and comparative analyses with other Solanaceae genomes.</title>
        <authorList>
            <person name="Gargano D."/>
            <person name="Scotti N."/>
            <person name="Vezzi A."/>
            <person name="Bilardi A."/>
            <person name="Valle G."/>
            <person name="Grillo S."/>
            <person name="Cardi T."/>
        </authorList>
    </citation>
    <scope>NUCLEOTIDE SEQUENCE [LARGE SCALE GENOMIC DNA]</scope>
    <source>
        <strain>cv. Desiree</strain>
    </source>
</reference>
<dbReference type="EMBL" id="DQ231562">
    <property type="protein sequence ID" value="ABB90086.1"/>
    <property type="molecule type" value="Genomic_DNA"/>
</dbReference>
<dbReference type="EMBL" id="DQ386163">
    <property type="protein sequence ID" value="ABD47105.1"/>
    <property type="molecule type" value="Genomic_DNA"/>
</dbReference>
<dbReference type="RefSeq" id="YP_635687.1">
    <property type="nucleotide sequence ID" value="NC_008096.2"/>
</dbReference>
<dbReference type="SMR" id="Q2VED2"/>
<dbReference type="FunCoup" id="Q2VED2">
    <property type="interactions" value="329"/>
</dbReference>
<dbReference type="STRING" id="4113.Q2VED2"/>
<dbReference type="PaxDb" id="4113-PGSC0003DMT400002291"/>
<dbReference type="GeneID" id="4099902"/>
<dbReference type="KEGG" id="sot:4099902"/>
<dbReference type="eggNOG" id="ENOG502SANY">
    <property type="taxonomic scope" value="Eukaryota"/>
</dbReference>
<dbReference type="InParanoid" id="Q2VED2"/>
<dbReference type="OrthoDB" id="1938523at2759"/>
<dbReference type="Proteomes" id="UP000011115">
    <property type="component" value="Unassembled WGS sequence"/>
</dbReference>
<dbReference type="GO" id="GO:0009507">
    <property type="term" value="C:chloroplast"/>
    <property type="evidence" value="ECO:0007669"/>
    <property type="project" value="UniProtKB-SubCell"/>
</dbReference>
<dbReference type="GO" id="GO:0015934">
    <property type="term" value="C:large ribosomal subunit"/>
    <property type="evidence" value="ECO:0007669"/>
    <property type="project" value="InterPro"/>
</dbReference>
<dbReference type="GO" id="GO:0003735">
    <property type="term" value="F:structural constituent of ribosome"/>
    <property type="evidence" value="ECO:0007669"/>
    <property type="project" value="InterPro"/>
</dbReference>
<dbReference type="GO" id="GO:0006412">
    <property type="term" value="P:translation"/>
    <property type="evidence" value="ECO:0007669"/>
    <property type="project" value="UniProtKB-UniRule"/>
</dbReference>
<dbReference type="HAMAP" id="MF_00340">
    <property type="entry name" value="Ribosomal_bL32"/>
    <property type="match status" value="1"/>
</dbReference>
<dbReference type="InterPro" id="IPR002677">
    <property type="entry name" value="Ribosomal_bL32"/>
</dbReference>
<dbReference type="InterPro" id="IPR044958">
    <property type="entry name" value="Ribosomal_bL32_plant/cyanobact"/>
</dbReference>
<dbReference type="InterPro" id="IPR011332">
    <property type="entry name" value="Ribosomal_zn-bd"/>
</dbReference>
<dbReference type="PANTHER" id="PTHR36083">
    <property type="entry name" value="50S RIBOSOMAL PROTEIN L32, CHLOROPLASTIC"/>
    <property type="match status" value="1"/>
</dbReference>
<dbReference type="PANTHER" id="PTHR36083:SF1">
    <property type="entry name" value="LARGE RIBOSOMAL SUBUNIT PROTEIN BL32C"/>
    <property type="match status" value="1"/>
</dbReference>
<dbReference type="Pfam" id="PF01783">
    <property type="entry name" value="Ribosomal_L32p"/>
    <property type="match status" value="1"/>
</dbReference>
<dbReference type="SUPFAM" id="SSF57829">
    <property type="entry name" value="Zn-binding ribosomal proteins"/>
    <property type="match status" value="1"/>
</dbReference>
<geneLocation type="chloroplast"/>
<keyword id="KW-0150">Chloroplast</keyword>
<keyword id="KW-0934">Plastid</keyword>
<keyword id="KW-1185">Reference proteome</keyword>
<keyword id="KW-0687">Ribonucleoprotein</keyword>
<keyword id="KW-0689">Ribosomal protein</keyword>
<gene>
    <name evidence="1" type="primary">rpl32</name>
</gene>
<protein>
    <recommendedName>
        <fullName evidence="1">Large ribosomal subunit protein bL32c</fullName>
    </recommendedName>
    <alternativeName>
        <fullName evidence="2">50S ribosomal protein L32, chloroplastic</fullName>
    </alternativeName>
</protein>
<name>RK32_SOLTU</name>
<proteinExistence type="inferred from homology"/>
<feature type="chain" id="PRO_0000276487" description="Large ribosomal subunit protein bL32c">
    <location>
        <begin position="1"/>
        <end position="55"/>
    </location>
</feature>